<reference key="1">
    <citation type="journal article" date="2002" name="Nature">
        <title>Genome sequence of the plant pathogen Ralstonia solanacearum.</title>
        <authorList>
            <person name="Salanoubat M."/>
            <person name="Genin S."/>
            <person name="Artiguenave F."/>
            <person name="Gouzy J."/>
            <person name="Mangenot S."/>
            <person name="Arlat M."/>
            <person name="Billault A."/>
            <person name="Brottier P."/>
            <person name="Camus J.-C."/>
            <person name="Cattolico L."/>
            <person name="Chandler M."/>
            <person name="Choisne N."/>
            <person name="Claudel-Renard C."/>
            <person name="Cunnac S."/>
            <person name="Demange N."/>
            <person name="Gaspin C."/>
            <person name="Lavie M."/>
            <person name="Moisan A."/>
            <person name="Robert C."/>
            <person name="Saurin W."/>
            <person name="Schiex T."/>
            <person name="Siguier P."/>
            <person name="Thebault P."/>
            <person name="Whalen M."/>
            <person name="Wincker P."/>
            <person name="Levy M."/>
            <person name="Weissenbach J."/>
            <person name="Boucher C.A."/>
        </authorList>
    </citation>
    <scope>NUCLEOTIDE SEQUENCE [LARGE SCALE GENOMIC DNA]</scope>
    <source>
        <strain>ATCC BAA-1114 / GMI1000</strain>
    </source>
</reference>
<accession>Q8XXC3</accession>
<gene>
    <name evidence="1" type="primary">hemF</name>
    <name type="ordered locus">RSc2192</name>
    <name type="ORF">RS01407</name>
</gene>
<comment type="function">
    <text evidence="1">Involved in the heme biosynthesis. Catalyzes the aerobic oxidative decarboxylation of propionate groups of rings A and B of coproporphyrinogen-III to yield the vinyl groups in protoporphyrinogen-IX.</text>
</comment>
<comment type="catalytic activity">
    <reaction evidence="1">
        <text>coproporphyrinogen III + O2 + 2 H(+) = protoporphyrinogen IX + 2 CO2 + 2 H2O</text>
        <dbReference type="Rhea" id="RHEA:18257"/>
        <dbReference type="ChEBI" id="CHEBI:15377"/>
        <dbReference type="ChEBI" id="CHEBI:15378"/>
        <dbReference type="ChEBI" id="CHEBI:15379"/>
        <dbReference type="ChEBI" id="CHEBI:16526"/>
        <dbReference type="ChEBI" id="CHEBI:57307"/>
        <dbReference type="ChEBI" id="CHEBI:57309"/>
        <dbReference type="EC" id="1.3.3.3"/>
    </reaction>
</comment>
<comment type="cofactor">
    <cofactor evidence="1">
        <name>a divalent metal cation</name>
        <dbReference type="ChEBI" id="CHEBI:60240"/>
    </cofactor>
</comment>
<comment type="pathway">
    <text evidence="1">Porphyrin-containing compound metabolism; protoporphyrin-IX biosynthesis; protoporphyrinogen-IX from coproporphyrinogen-III (O2 route): step 1/1.</text>
</comment>
<comment type="subunit">
    <text evidence="1">Homodimer.</text>
</comment>
<comment type="subcellular location">
    <subcellularLocation>
        <location evidence="1">Cytoplasm</location>
    </subcellularLocation>
</comment>
<comment type="similarity">
    <text evidence="1">Belongs to the aerobic coproporphyrinogen-III oxidase family.</text>
</comment>
<organism>
    <name type="scientific">Ralstonia nicotianae (strain ATCC BAA-1114 / GMI1000)</name>
    <name type="common">Ralstonia solanacearum</name>
    <dbReference type="NCBI Taxonomy" id="267608"/>
    <lineage>
        <taxon>Bacteria</taxon>
        <taxon>Pseudomonadati</taxon>
        <taxon>Pseudomonadota</taxon>
        <taxon>Betaproteobacteria</taxon>
        <taxon>Burkholderiales</taxon>
        <taxon>Burkholderiaceae</taxon>
        <taxon>Ralstonia</taxon>
        <taxon>Ralstonia solanacearum species complex</taxon>
    </lineage>
</organism>
<protein>
    <recommendedName>
        <fullName evidence="1">Oxygen-dependent coproporphyrinogen-III oxidase</fullName>
        <shortName evidence="1">CPO</shortName>
        <shortName evidence="1">Coprogen oxidase</shortName>
        <shortName evidence="1">Coproporphyrinogenase</shortName>
        <ecNumber evidence="1">1.3.3.3</ecNumber>
    </recommendedName>
</protein>
<name>HEM6_RALN1</name>
<evidence type="ECO:0000255" key="1">
    <source>
        <dbReference type="HAMAP-Rule" id="MF_00333"/>
    </source>
</evidence>
<feature type="chain" id="PRO_0000109913" description="Oxygen-dependent coproporphyrinogen-III oxidase">
    <location>
        <begin position="1"/>
        <end position="302"/>
    </location>
</feature>
<feature type="region of interest" description="Important for dimerization" evidence="1">
    <location>
        <begin position="242"/>
        <end position="277"/>
    </location>
</feature>
<feature type="active site" description="Proton donor" evidence="1">
    <location>
        <position position="108"/>
    </location>
</feature>
<feature type="binding site" evidence="1">
    <location>
        <position position="94"/>
    </location>
    <ligand>
        <name>substrate</name>
    </ligand>
</feature>
<feature type="binding site" evidence="1">
    <location>
        <position position="98"/>
    </location>
    <ligand>
        <name>a divalent metal cation</name>
        <dbReference type="ChEBI" id="CHEBI:60240"/>
    </ligand>
</feature>
<feature type="binding site" evidence="1">
    <location>
        <position position="108"/>
    </location>
    <ligand>
        <name>a divalent metal cation</name>
        <dbReference type="ChEBI" id="CHEBI:60240"/>
    </ligand>
</feature>
<feature type="binding site" evidence="1">
    <location>
        <begin position="110"/>
        <end position="112"/>
    </location>
    <ligand>
        <name>substrate</name>
    </ligand>
</feature>
<feature type="binding site" evidence="1">
    <location>
        <position position="147"/>
    </location>
    <ligand>
        <name>a divalent metal cation</name>
        <dbReference type="ChEBI" id="CHEBI:60240"/>
    </ligand>
</feature>
<feature type="binding site" evidence="1">
    <location>
        <position position="177"/>
    </location>
    <ligand>
        <name>a divalent metal cation</name>
        <dbReference type="ChEBI" id="CHEBI:60240"/>
    </ligand>
</feature>
<feature type="binding site" evidence="1">
    <location>
        <begin position="260"/>
        <end position="262"/>
    </location>
    <ligand>
        <name>substrate</name>
    </ligand>
</feature>
<feature type="site" description="Important for dimerization" evidence="1">
    <location>
        <position position="177"/>
    </location>
</feature>
<keyword id="KW-0963">Cytoplasm</keyword>
<keyword id="KW-0350">Heme biosynthesis</keyword>
<keyword id="KW-0479">Metal-binding</keyword>
<keyword id="KW-0560">Oxidoreductase</keyword>
<keyword id="KW-0627">Porphyrin biosynthesis</keyword>
<keyword id="KW-1185">Reference proteome</keyword>
<dbReference type="EC" id="1.3.3.3" evidence="1"/>
<dbReference type="EMBL" id="AL646052">
    <property type="protein sequence ID" value="CAD15899.1"/>
    <property type="molecule type" value="Genomic_DNA"/>
</dbReference>
<dbReference type="RefSeq" id="WP_011002120.1">
    <property type="nucleotide sequence ID" value="NC_003295.1"/>
</dbReference>
<dbReference type="SMR" id="Q8XXC3"/>
<dbReference type="STRING" id="267608.RSc2192"/>
<dbReference type="EnsemblBacteria" id="CAD15899">
    <property type="protein sequence ID" value="CAD15899"/>
    <property type="gene ID" value="RSc2192"/>
</dbReference>
<dbReference type="KEGG" id="rso:RSc2192"/>
<dbReference type="eggNOG" id="COG0408">
    <property type="taxonomic scope" value="Bacteria"/>
</dbReference>
<dbReference type="HOGENOM" id="CLU_026169_0_1_4"/>
<dbReference type="UniPathway" id="UPA00251">
    <property type="reaction ID" value="UER00322"/>
</dbReference>
<dbReference type="Proteomes" id="UP000001436">
    <property type="component" value="Chromosome"/>
</dbReference>
<dbReference type="GO" id="GO:0005737">
    <property type="term" value="C:cytoplasm"/>
    <property type="evidence" value="ECO:0007669"/>
    <property type="project" value="UniProtKB-SubCell"/>
</dbReference>
<dbReference type="GO" id="GO:0004109">
    <property type="term" value="F:coproporphyrinogen oxidase activity"/>
    <property type="evidence" value="ECO:0007669"/>
    <property type="project" value="UniProtKB-UniRule"/>
</dbReference>
<dbReference type="GO" id="GO:0046872">
    <property type="term" value="F:metal ion binding"/>
    <property type="evidence" value="ECO:0007669"/>
    <property type="project" value="UniProtKB-KW"/>
</dbReference>
<dbReference type="GO" id="GO:0042803">
    <property type="term" value="F:protein homodimerization activity"/>
    <property type="evidence" value="ECO:0000250"/>
    <property type="project" value="UniProtKB"/>
</dbReference>
<dbReference type="GO" id="GO:0006782">
    <property type="term" value="P:protoporphyrinogen IX biosynthetic process"/>
    <property type="evidence" value="ECO:0007669"/>
    <property type="project" value="UniProtKB-UniRule"/>
</dbReference>
<dbReference type="FunFam" id="3.40.1500.10:FF:000001">
    <property type="entry name" value="Oxygen-dependent coproporphyrinogen-III oxidase"/>
    <property type="match status" value="1"/>
</dbReference>
<dbReference type="Gene3D" id="3.40.1500.10">
    <property type="entry name" value="Coproporphyrinogen III oxidase, aerobic"/>
    <property type="match status" value="1"/>
</dbReference>
<dbReference type="HAMAP" id="MF_00333">
    <property type="entry name" value="Coprogen_oxidas"/>
    <property type="match status" value="1"/>
</dbReference>
<dbReference type="InterPro" id="IPR001260">
    <property type="entry name" value="Coprogen_oxidase_aer"/>
</dbReference>
<dbReference type="InterPro" id="IPR036406">
    <property type="entry name" value="Coprogen_oxidase_aer_sf"/>
</dbReference>
<dbReference type="InterPro" id="IPR018375">
    <property type="entry name" value="Coprogen_oxidase_CS"/>
</dbReference>
<dbReference type="NCBIfam" id="NF003727">
    <property type="entry name" value="PRK05330.1"/>
    <property type="match status" value="1"/>
</dbReference>
<dbReference type="PANTHER" id="PTHR10755">
    <property type="entry name" value="COPROPORPHYRINOGEN III OXIDASE, MITOCHONDRIAL"/>
    <property type="match status" value="1"/>
</dbReference>
<dbReference type="PANTHER" id="PTHR10755:SF0">
    <property type="entry name" value="OXYGEN-DEPENDENT COPROPORPHYRINOGEN-III OXIDASE, MITOCHONDRIAL"/>
    <property type="match status" value="1"/>
</dbReference>
<dbReference type="Pfam" id="PF01218">
    <property type="entry name" value="Coprogen_oxidas"/>
    <property type="match status" value="1"/>
</dbReference>
<dbReference type="PIRSF" id="PIRSF000166">
    <property type="entry name" value="Coproporphyri_ox"/>
    <property type="match status" value="1"/>
</dbReference>
<dbReference type="PRINTS" id="PR00073">
    <property type="entry name" value="COPRGNOXDASE"/>
</dbReference>
<dbReference type="SUPFAM" id="SSF102886">
    <property type="entry name" value="Coproporphyrinogen III oxidase"/>
    <property type="match status" value="1"/>
</dbReference>
<dbReference type="PROSITE" id="PS01021">
    <property type="entry name" value="COPROGEN_OXIDASE"/>
    <property type="match status" value="1"/>
</dbReference>
<proteinExistence type="inferred from homology"/>
<sequence length="302" mass="34212">MDTQAVRAYLLDLQDRITTAVGTLDGGTFVTDTWDKPPTERLRGSGRTCILENGAVLERGGVGFSHVMGDTLPPSATANRPELAGRGFEAMGVSLVFHPRNPYAPTVHMNVRCFVAQRPDAEPVWWFGGGMDLTPYYGFAEDAAHFHRTCKQALEPFGEELYPRFKQWCDDYFYLKHRKEARGVGGIFFDDFAELGFERSFEMMRAVGDALLPAWLPIAEQRHATPYGERERAFQAYRRGRYVEFNLVFDRGTLFGLQSGGRTESILMSMPPVANWRYDWQPEPGSPEAALYTDFLPARDWV</sequence>